<dbReference type="EC" id="3.1.-.-" evidence="1"/>
<dbReference type="EMBL" id="FN393077">
    <property type="protein sequence ID" value="CAY80978.1"/>
    <property type="molecule type" value="Genomic_DNA"/>
</dbReference>
<dbReference type="SMR" id="C8ZC62"/>
<dbReference type="HOGENOM" id="CLU_032444_2_0_1"/>
<dbReference type="OrthoDB" id="22257at4893"/>
<dbReference type="Proteomes" id="UP000000286">
    <property type="component" value="Chromosome XI, Scaffold EC1118_1K5"/>
</dbReference>
<dbReference type="GO" id="GO:0005739">
    <property type="term" value="C:mitochondrion"/>
    <property type="evidence" value="ECO:0007669"/>
    <property type="project" value="UniProtKB-SubCell"/>
</dbReference>
<dbReference type="GO" id="GO:0005730">
    <property type="term" value="C:nucleolus"/>
    <property type="evidence" value="ECO:0007669"/>
    <property type="project" value="UniProtKB-SubCell"/>
</dbReference>
<dbReference type="GO" id="GO:0005654">
    <property type="term" value="C:nucleoplasm"/>
    <property type="evidence" value="ECO:0007669"/>
    <property type="project" value="UniProtKB-SubCell"/>
</dbReference>
<dbReference type="GO" id="GO:0008409">
    <property type="term" value="F:5'-3' exonuclease activity"/>
    <property type="evidence" value="ECO:0007669"/>
    <property type="project" value="UniProtKB-UniRule"/>
</dbReference>
<dbReference type="GO" id="GO:0017108">
    <property type="term" value="F:5'-flap endonuclease activity"/>
    <property type="evidence" value="ECO:0007669"/>
    <property type="project" value="UniProtKB-UniRule"/>
</dbReference>
<dbReference type="GO" id="GO:0003677">
    <property type="term" value="F:DNA binding"/>
    <property type="evidence" value="ECO:0007669"/>
    <property type="project" value="UniProtKB-UniRule"/>
</dbReference>
<dbReference type="GO" id="GO:0000287">
    <property type="term" value="F:magnesium ion binding"/>
    <property type="evidence" value="ECO:0007669"/>
    <property type="project" value="UniProtKB-UniRule"/>
</dbReference>
<dbReference type="GO" id="GO:0006284">
    <property type="term" value="P:base-excision repair"/>
    <property type="evidence" value="ECO:0007669"/>
    <property type="project" value="UniProtKB-UniRule"/>
</dbReference>
<dbReference type="GO" id="GO:0043137">
    <property type="term" value="P:DNA replication, removal of RNA primer"/>
    <property type="evidence" value="ECO:0007669"/>
    <property type="project" value="UniProtKB-UniRule"/>
</dbReference>
<dbReference type="CDD" id="cd09907">
    <property type="entry name" value="H3TH_FEN1-Euk"/>
    <property type="match status" value="1"/>
</dbReference>
<dbReference type="CDD" id="cd09867">
    <property type="entry name" value="PIN_FEN1"/>
    <property type="match status" value="1"/>
</dbReference>
<dbReference type="FunFam" id="1.10.150.20:FF:000009">
    <property type="entry name" value="Flap endonuclease 1"/>
    <property type="match status" value="1"/>
</dbReference>
<dbReference type="FunFam" id="3.40.50.1010:FF:000003">
    <property type="entry name" value="Flap endonuclease 1"/>
    <property type="match status" value="1"/>
</dbReference>
<dbReference type="Gene3D" id="1.10.150.20">
    <property type="entry name" value="5' to 3' exonuclease, C-terminal subdomain"/>
    <property type="match status" value="1"/>
</dbReference>
<dbReference type="Gene3D" id="3.40.50.1010">
    <property type="entry name" value="5'-nuclease"/>
    <property type="match status" value="1"/>
</dbReference>
<dbReference type="HAMAP" id="MF_00614">
    <property type="entry name" value="Fen"/>
    <property type="match status" value="1"/>
</dbReference>
<dbReference type="InterPro" id="IPR036279">
    <property type="entry name" value="5-3_exonuclease_C_sf"/>
</dbReference>
<dbReference type="InterPro" id="IPR023426">
    <property type="entry name" value="Flap_endonuc"/>
</dbReference>
<dbReference type="InterPro" id="IPR008918">
    <property type="entry name" value="HhH2"/>
</dbReference>
<dbReference type="InterPro" id="IPR029060">
    <property type="entry name" value="PIN-like_dom_sf"/>
</dbReference>
<dbReference type="InterPro" id="IPR006086">
    <property type="entry name" value="XPG-I_dom"/>
</dbReference>
<dbReference type="InterPro" id="IPR006084">
    <property type="entry name" value="XPG/Rad2"/>
</dbReference>
<dbReference type="InterPro" id="IPR019974">
    <property type="entry name" value="XPG_CS"/>
</dbReference>
<dbReference type="InterPro" id="IPR006085">
    <property type="entry name" value="XPG_DNA_repair_N"/>
</dbReference>
<dbReference type="PANTHER" id="PTHR11081:SF9">
    <property type="entry name" value="FLAP ENDONUCLEASE 1"/>
    <property type="match status" value="1"/>
</dbReference>
<dbReference type="PANTHER" id="PTHR11081">
    <property type="entry name" value="FLAP ENDONUCLEASE FAMILY MEMBER"/>
    <property type="match status" value="1"/>
</dbReference>
<dbReference type="Pfam" id="PF00867">
    <property type="entry name" value="XPG_I"/>
    <property type="match status" value="1"/>
</dbReference>
<dbReference type="Pfam" id="PF00752">
    <property type="entry name" value="XPG_N"/>
    <property type="match status" value="1"/>
</dbReference>
<dbReference type="PRINTS" id="PR00853">
    <property type="entry name" value="XPGRADSUPER"/>
</dbReference>
<dbReference type="SMART" id="SM00279">
    <property type="entry name" value="HhH2"/>
    <property type="match status" value="1"/>
</dbReference>
<dbReference type="SMART" id="SM00484">
    <property type="entry name" value="XPGI"/>
    <property type="match status" value="1"/>
</dbReference>
<dbReference type="SMART" id="SM00485">
    <property type="entry name" value="XPGN"/>
    <property type="match status" value="1"/>
</dbReference>
<dbReference type="SUPFAM" id="SSF47807">
    <property type="entry name" value="5' to 3' exonuclease, C-terminal subdomain"/>
    <property type="match status" value="1"/>
</dbReference>
<dbReference type="SUPFAM" id="SSF88723">
    <property type="entry name" value="PIN domain-like"/>
    <property type="match status" value="1"/>
</dbReference>
<dbReference type="PROSITE" id="PS00841">
    <property type="entry name" value="XPG_1"/>
    <property type="match status" value="1"/>
</dbReference>
<dbReference type="PROSITE" id="PS00842">
    <property type="entry name" value="XPG_2"/>
    <property type="match status" value="1"/>
</dbReference>
<comment type="function">
    <text evidence="1">Structure-specific nuclease with 5'-flap endonuclease and 5'-3' exonuclease activities involved in DNA replication and repair. During DNA replication, cleaves the 5'-overhanging flap structure that is generated by displacement synthesis when DNA polymerase encounters the 5'-end of a downstream Okazaki fragment. It enters the flap from the 5'-end and then tracks to cleave the flap base, leaving a nick for ligation. Also involved in the long patch base excision repair (LP-BER) pathway, by cleaving within the apurinic/apyrimidinic (AP) site-terminated flap. Acts as a genome stabilization factor that prevents flaps from equilibrating into structures that lead to duplications and deletions. Also possesses 5'-3' exonuclease activity on nicked or gapped double-stranded DNA, and exhibits RNase H activity. Also involved in replication and repair of rDNA and in repairing mitochondrial DNA.</text>
</comment>
<comment type="cofactor">
    <cofactor evidence="1">
        <name>Mg(2+)</name>
        <dbReference type="ChEBI" id="CHEBI:18420"/>
    </cofactor>
    <text evidence="1">Binds 2 magnesium ions per subunit. They probably participate in the reaction catalyzed by the enzyme. May bind an additional third magnesium ion after substrate binding.</text>
</comment>
<comment type="subunit">
    <text evidence="1">Interacts with PCNA. Three molecules of RAD27 bind to one PCNA trimer with each molecule binding to one PCNA monomer. PCNA stimulates the nuclease activity without altering cleavage specificity.</text>
</comment>
<comment type="subcellular location">
    <subcellularLocation>
        <location evidence="1">Nucleus</location>
        <location evidence="1">Nucleolus</location>
    </subcellularLocation>
    <subcellularLocation>
        <location evidence="1">Nucleus</location>
        <location evidence="1">Nucleoplasm</location>
    </subcellularLocation>
    <subcellularLocation>
        <location evidence="1">Mitochondrion</location>
    </subcellularLocation>
    <text evidence="1">Resides mostly in the nucleoli and relocalizes to the nucleoplasm upon DNA damage.</text>
</comment>
<comment type="PTM">
    <text evidence="1">Phosphorylated. Phosphorylation upon DNA damage induces relocalization to the nuclear plasma.</text>
</comment>
<comment type="similarity">
    <text evidence="1">Belongs to the XPG/RAD2 endonuclease family. FEN1 subfamily.</text>
</comment>
<reference key="1">
    <citation type="journal article" date="2009" name="Proc. Natl. Acad. Sci. U.S.A.">
        <title>Eukaryote-to-eukaryote gene transfer events revealed by the genome sequence of the wine yeast Saccharomyces cerevisiae EC1118.</title>
        <authorList>
            <person name="Novo M."/>
            <person name="Bigey F."/>
            <person name="Beyne E."/>
            <person name="Galeote V."/>
            <person name="Gavory F."/>
            <person name="Mallet S."/>
            <person name="Cambon B."/>
            <person name="Legras J.-L."/>
            <person name="Wincker P."/>
            <person name="Casaregola S."/>
            <person name="Dequin S."/>
        </authorList>
    </citation>
    <scope>NUCLEOTIDE SEQUENCE [LARGE SCALE GENOMIC DNA]</scope>
    <source>
        <strain>Lalvin EC1118 / Prise de mousse</strain>
    </source>
</reference>
<name>FEN1_YEAS8</name>
<protein>
    <recommendedName>
        <fullName evidence="1">Flap endonuclease 1</fullName>
        <shortName evidence="1">FEN-1</shortName>
        <ecNumber evidence="1">3.1.-.-</ecNumber>
    </recommendedName>
    <alternativeName>
        <fullName evidence="1">Flap structure-specific endonuclease 1</fullName>
    </alternativeName>
</protein>
<accession>C8ZC62</accession>
<evidence type="ECO:0000255" key="1">
    <source>
        <dbReference type="HAMAP-Rule" id="MF_03140"/>
    </source>
</evidence>
<evidence type="ECO:0000256" key="2">
    <source>
        <dbReference type="SAM" id="MobiDB-lite"/>
    </source>
</evidence>
<sequence>MGIKGLNAIISEHVPSAIRKSDIKSFFGRKVAIDASMSLYQFLIAVRQQDGGQLTNEAGETTSHLMGMFYRTLRMIDNGIKPCYVFDGKPPDLKSHELTKRSSRRVETEKKLAEATTELEKMKQERRLVKVSKEHNEEAQKLLGLMGIPYIIAPTEAEAQCAELAKKGKVYAAASEDMDTLCYRTPFLLRHLTFSEAKKEPIHEIDTELVLRGLDLTIEQFVDLCIMLGCDYCESIRGVGPVTALKLIKTHGSIEKIVEFIESGESNNTKWKIPEDWPYKQARMLFLDPEVIDGNEINLKWSPPKEKELIEYLCDDKKFSEERVKSGISRLKKGLKSGIQGRLDGFFQVVPKTKEQLAAAAKRAQENKKLNKNKNKVTKGRR</sequence>
<proteinExistence type="inferred from homology"/>
<feature type="chain" id="PRO_0000403597" description="Flap endonuclease 1">
    <location>
        <begin position="1"/>
        <end position="382"/>
    </location>
</feature>
<feature type="region of interest" description="N-domain">
    <location>
        <begin position="1"/>
        <end position="105"/>
    </location>
</feature>
<feature type="region of interest" description="I-domain">
    <location>
        <begin position="120"/>
        <end position="251"/>
    </location>
</feature>
<feature type="region of interest" description="Interaction with PCNA" evidence="1">
    <location>
        <begin position="339"/>
        <end position="347"/>
    </location>
</feature>
<feature type="region of interest" description="Disordered" evidence="2">
    <location>
        <begin position="358"/>
        <end position="382"/>
    </location>
</feature>
<feature type="compositionally biased region" description="Basic residues" evidence="2">
    <location>
        <begin position="370"/>
        <end position="382"/>
    </location>
</feature>
<feature type="binding site" evidence="1">
    <location>
        <position position="34"/>
    </location>
    <ligand>
        <name>Mg(2+)</name>
        <dbReference type="ChEBI" id="CHEBI:18420"/>
        <label>1</label>
    </ligand>
</feature>
<feature type="binding site" evidence="1">
    <location>
        <position position="47"/>
    </location>
    <ligand>
        <name>DNA</name>
        <dbReference type="ChEBI" id="CHEBI:16991"/>
    </ligand>
</feature>
<feature type="binding site" evidence="1">
    <location>
        <position position="71"/>
    </location>
    <ligand>
        <name>DNA</name>
        <dbReference type="ChEBI" id="CHEBI:16991"/>
    </ligand>
</feature>
<feature type="binding site" evidence="1">
    <location>
        <position position="87"/>
    </location>
    <ligand>
        <name>Mg(2+)</name>
        <dbReference type="ChEBI" id="CHEBI:18420"/>
        <label>1</label>
    </ligand>
</feature>
<feature type="binding site" evidence="1">
    <location>
        <position position="156"/>
    </location>
    <ligand>
        <name>DNA</name>
        <dbReference type="ChEBI" id="CHEBI:16991"/>
    </ligand>
</feature>
<feature type="binding site" evidence="1">
    <location>
        <position position="156"/>
    </location>
    <ligand>
        <name>Mg(2+)</name>
        <dbReference type="ChEBI" id="CHEBI:18420"/>
        <label>1</label>
    </ligand>
</feature>
<feature type="binding site" evidence="1">
    <location>
        <position position="158"/>
    </location>
    <ligand>
        <name>Mg(2+)</name>
        <dbReference type="ChEBI" id="CHEBI:18420"/>
        <label>1</label>
    </ligand>
</feature>
<feature type="binding site" evidence="1">
    <location>
        <position position="177"/>
    </location>
    <ligand>
        <name>Mg(2+)</name>
        <dbReference type="ChEBI" id="CHEBI:18420"/>
        <label>2</label>
    </ligand>
</feature>
<feature type="binding site" evidence="1">
    <location>
        <position position="179"/>
    </location>
    <ligand>
        <name>Mg(2+)</name>
        <dbReference type="ChEBI" id="CHEBI:18420"/>
        <label>2</label>
    </ligand>
</feature>
<feature type="binding site" evidence="1">
    <location>
        <position position="229"/>
    </location>
    <ligand>
        <name>DNA</name>
        <dbReference type="ChEBI" id="CHEBI:16991"/>
    </ligand>
</feature>
<feature type="binding site" evidence="1">
    <location>
        <position position="231"/>
    </location>
    <ligand>
        <name>DNA</name>
        <dbReference type="ChEBI" id="CHEBI:16991"/>
    </ligand>
</feature>
<feature type="binding site" evidence="1">
    <location>
        <position position="231"/>
    </location>
    <ligand>
        <name>Mg(2+)</name>
        <dbReference type="ChEBI" id="CHEBI:18420"/>
        <label>2</label>
    </ligand>
</feature>
<gene>
    <name evidence="1" type="primary">RAD27</name>
    <name evidence="1" type="synonym">FEN1</name>
    <name type="ORF">EC1118_1K5_1211g</name>
</gene>
<organism>
    <name type="scientific">Saccharomyces cerevisiae (strain Lalvin EC1118 / Prise de mousse)</name>
    <name type="common">Baker's yeast</name>
    <dbReference type="NCBI Taxonomy" id="643680"/>
    <lineage>
        <taxon>Eukaryota</taxon>
        <taxon>Fungi</taxon>
        <taxon>Dikarya</taxon>
        <taxon>Ascomycota</taxon>
        <taxon>Saccharomycotina</taxon>
        <taxon>Saccharomycetes</taxon>
        <taxon>Saccharomycetales</taxon>
        <taxon>Saccharomycetaceae</taxon>
        <taxon>Saccharomyces</taxon>
    </lineage>
</organism>
<keyword id="KW-0227">DNA damage</keyword>
<keyword id="KW-0234">DNA repair</keyword>
<keyword id="KW-0235">DNA replication</keyword>
<keyword id="KW-0255">Endonuclease</keyword>
<keyword id="KW-0269">Exonuclease</keyword>
<keyword id="KW-0378">Hydrolase</keyword>
<keyword id="KW-0460">Magnesium</keyword>
<keyword id="KW-0479">Metal-binding</keyword>
<keyword id="KW-0496">Mitochondrion</keyword>
<keyword id="KW-0540">Nuclease</keyword>
<keyword id="KW-0539">Nucleus</keyword>
<keyword id="KW-0597">Phosphoprotein</keyword>